<proteinExistence type="evidence at transcript level"/>
<name>NHR3_CAEEL</name>
<accession>Q9XTJ4</accession>
<gene>
    <name type="primary">nhr-3</name>
    <name type="ORF">H01A20.1</name>
</gene>
<sequence>MTDTQSPFSFAAALLQCGSPGQTFSMESLLKPELGEYSPSGENGIDGEESTICSVCCDEASGRHYGVVACFGCKGFFRRTVRAGKNYVCRYSKKCRIDKAGRNVCRSCRFQKCLEVGMEPDAIRPDRDKTGRQKNPRRNTEGSIKKVSVGSILGDLPCLNKFKDDSDDAATSPSSRADSAPMDLRPSFIDESVLTTLTEIENIVIQLQDNFETNQQSLPPMGEAITKPSLIAARTLLNFNGAKGVADANCVSSNLRRMIVFTFDYINTLRPIADLHPSEKLVIARSIISPFCILFCGYQSVAIEAPEHDSIYLPSGHKLPASQLLFTKDSDQKKYILLENKADNVRRNMTEMIIQQLRRLNVTKTEMVALKAIMALDHNVKGLSAESCELLVVARESVQNALFSHLIATFGTAEATSRFAHLLLLIASATRVAYSLSSFFQLSRDVNYEIDYVLEELLFLDRI</sequence>
<dbReference type="EMBL" id="AF083222">
    <property type="protein sequence ID" value="AAD03680.1"/>
    <property type="molecule type" value="mRNA"/>
</dbReference>
<dbReference type="EMBL" id="AF273769">
    <property type="protein sequence ID" value="AAG15118.1"/>
    <property type="molecule type" value="mRNA"/>
</dbReference>
<dbReference type="EMBL" id="AL021387">
    <property type="protein sequence ID" value="CAA16168.1"/>
    <property type="molecule type" value="Genomic_DNA"/>
</dbReference>
<dbReference type="PIR" id="T43344">
    <property type="entry name" value="T43344"/>
</dbReference>
<dbReference type="RefSeq" id="NP_510423.1">
    <property type="nucleotide sequence ID" value="NM_078022.7"/>
</dbReference>
<dbReference type="SMR" id="Q9XTJ4"/>
<dbReference type="BioGRID" id="46449">
    <property type="interactions" value="1"/>
</dbReference>
<dbReference type="FunCoup" id="Q9XTJ4">
    <property type="interactions" value="215"/>
</dbReference>
<dbReference type="STRING" id="6239.H01A20.1.1"/>
<dbReference type="iPTMnet" id="Q9XTJ4"/>
<dbReference type="PaxDb" id="6239-H01A20.1"/>
<dbReference type="EnsemblMetazoa" id="H01A20.1.1">
    <property type="protein sequence ID" value="H01A20.1.1"/>
    <property type="gene ID" value="WBGene00003602"/>
</dbReference>
<dbReference type="GeneID" id="181551"/>
<dbReference type="KEGG" id="cel:CELE_H01A20.1"/>
<dbReference type="UCSC" id="H01A20.1">
    <property type="organism name" value="c. elegans"/>
</dbReference>
<dbReference type="AGR" id="WB:WBGene00003602"/>
<dbReference type="CTD" id="181551"/>
<dbReference type="WormBase" id="H01A20.1">
    <property type="protein sequence ID" value="CE18798"/>
    <property type="gene ID" value="WBGene00003602"/>
    <property type="gene designation" value="nhr-3"/>
</dbReference>
<dbReference type="eggNOG" id="KOG3575">
    <property type="taxonomic scope" value="Eukaryota"/>
</dbReference>
<dbReference type="HOGENOM" id="CLU_007368_3_3_1"/>
<dbReference type="InParanoid" id="Q9XTJ4"/>
<dbReference type="OMA" id="KCRIDKA"/>
<dbReference type="OrthoDB" id="5799427at2759"/>
<dbReference type="PhylomeDB" id="Q9XTJ4"/>
<dbReference type="Reactome" id="R-CEL-383280">
    <property type="pathway name" value="Nuclear Receptor transcription pathway"/>
</dbReference>
<dbReference type="Reactome" id="R-CEL-4090294">
    <property type="pathway name" value="SUMOylation of intracellular receptors"/>
</dbReference>
<dbReference type="PRO" id="PR:Q9XTJ4"/>
<dbReference type="Proteomes" id="UP000001940">
    <property type="component" value="Chromosome X"/>
</dbReference>
<dbReference type="Bgee" id="WBGene00003602">
    <property type="expression patterns" value="Expressed in pharyngeal muscle cell (C elegans) and 3 other cell types or tissues"/>
</dbReference>
<dbReference type="GO" id="GO:0090575">
    <property type="term" value="C:RNA polymerase II transcription regulator complex"/>
    <property type="evidence" value="ECO:0000318"/>
    <property type="project" value="GO_Central"/>
</dbReference>
<dbReference type="GO" id="GO:0003700">
    <property type="term" value="F:DNA-binding transcription factor activity"/>
    <property type="evidence" value="ECO:0007669"/>
    <property type="project" value="InterPro"/>
</dbReference>
<dbReference type="GO" id="GO:0000978">
    <property type="term" value="F:RNA polymerase II cis-regulatory region sequence-specific DNA binding"/>
    <property type="evidence" value="ECO:0000318"/>
    <property type="project" value="GO_Central"/>
</dbReference>
<dbReference type="GO" id="GO:0008270">
    <property type="term" value="F:zinc ion binding"/>
    <property type="evidence" value="ECO:0007669"/>
    <property type="project" value="UniProtKB-KW"/>
</dbReference>
<dbReference type="GO" id="GO:0009755">
    <property type="term" value="P:hormone-mediated signaling pathway"/>
    <property type="evidence" value="ECO:0000318"/>
    <property type="project" value="GO_Central"/>
</dbReference>
<dbReference type="GO" id="GO:0006357">
    <property type="term" value="P:regulation of transcription by RNA polymerase II"/>
    <property type="evidence" value="ECO:0000318"/>
    <property type="project" value="GO_Central"/>
</dbReference>
<dbReference type="GO" id="GO:0009888">
    <property type="term" value="P:tissue development"/>
    <property type="evidence" value="ECO:0000318"/>
    <property type="project" value="GO_Central"/>
</dbReference>
<dbReference type="CDD" id="cd06960">
    <property type="entry name" value="NR_DBD_HNF4A"/>
    <property type="match status" value="1"/>
</dbReference>
<dbReference type="CDD" id="cd06157">
    <property type="entry name" value="NR_LBD"/>
    <property type="match status" value="1"/>
</dbReference>
<dbReference type="FunFam" id="3.30.50.10:FF:000030">
    <property type="entry name" value="Nuclear Hormone Receptor family"/>
    <property type="match status" value="1"/>
</dbReference>
<dbReference type="Gene3D" id="3.30.50.10">
    <property type="entry name" value="Erythroid Transcription Factor GATA-1, subunit A"/>
    <property type="match status" value="1"/>
</dbReference>
<dbReference type="Gene3D" id="1.10.565.10">
    <property type="entry name" value="Retinoid X Receptor"/>
    <property type="match status" value="1"/>
</dbReference>
<dbReference type="InterPro" id="IPR049636">
    <property type="entry name" value="HNF4-like_DBD"/>
</dbReference>
<dbReference type="InterPro" id="IPR035500">
    <property type="entry name" value="NHR-like_dom_sf"/>
</dbReference>
<dbReference type="InterPro" id="IPR000536">
    <property type="entry name" value="Nucl_hrmn_rcpt_lig-bd"/>
</dbReference>
<dbReference type="InterPro" id="IPR052496">
    <property type="entry name" value="Orphan_Nuclear_Rcpt"/>
</dbReference>
<dbReference type="InterPro" id="IPR001628">
    <property type="entry name" value="Znf_hrmn_rcpt"/>
</dbReference>
<dbReference type="InterPro" id="IPR013088">
    <property type="entry name" value="Znf_NHR/GATA"/>
</dbReference>
<dbReference type="PANTHER" id="PTHR47519:SF5">
    <property type="entry name" value="NUCLEAR HORMONE RECEPTOR E75"/>
    <property type="match status" value="1"/>
</dbReference>
<dbReference type="PANTHER" id="PTHR47519">
    <property type="entry name" value="NUCLEAR HORMONE RECEPTOR FAMILY MEMBER NHR-31-RELATED"/>
    <property type="match status" value="1"/>
</dbReference>
<dbReference type="Pfam" id="PF00104">
    <property type="entry name" value="Hormone_recep"/>
    <property type="match status" value="1"/>
</dbReference>
<dbReference type="Pfam" id="PF00105">
    <property type="entry name" value="zf-C4"/>
    <property type="match status" value="1"/>
</dbReference>
<dbReference type="PRINTS" id="PR00047">
    <property type="entry name" value="STROIDFINGER"/>
</dbReference>
<dbReference type="SMART" id="SM00430">
    <property type="entry name" value="HOLI"/>
    <property type="match status" value="1"/>
</dbReference>
<dbReference type="SMART" id="SM00399">
    <property type="entry name" value="ZnF_C4"/>
    <property type="match status" value="1"/>
</dbReference>
<dbReference type="SUPFAM" id="SSF57716">
    <property type="entry name" value="Glucocorticoid receptor-like (DNA-binding domain)"/>
    <property type="match status" value="1"/>
</dbReference>
<dbReference type="SUPFAM" id="SSF48508">
    <property type="entry name" value="Nuclear receptor ligand-binding domain"/>
    <property type="match status" value="1"/>
</dbReference>
<dbReference type="PROSITE" id="PS51843">
    <property type="entry name" value="NR_LBD"/>
    <property type="match status" value="1"/>
</dbReference>
<dbReference type="PROSITE" id="PS00031">
    <property type="entry name" value="NUCLEAR_REC_DBD_1"/>
    <property type="match status" value="1"/>
</dbReference>
<dbReference type="PROSITE" id="PS51030">
    <property type="entry name" value="NUCLEAR_REC_DBD_2"/>
    <property type="match status" value="1"/>
</dbReference>
<reference key="1">
    <citation type="journal article" date="1999" name="Genome Res.">
        <title>The nuclear receptor superfamily has undergone extensive proliferation and diversification in nematodes.</title>
        <authorList>
            <person name="Sluder A.E."/>
            <person name="Mathews S.W."/>
            <person name="Hough D."/>
            <person name="Yin V.P."/>
            <person name="Maina C.V."/>
        </authorList>
    </citation>
    <scope>NUCLEOTIDE SEQUENCE [MRNA]</scope>
    <source>
        <strain>Bristol N2</strain>
    </source>
</reference>
<reference key="2">
    <citation type="journal article" date="2005" name="J. Mol. Evol.">
        <title>Explosive lineage-specific expansion of the orphan nuclear receptor HNF4 in nematodes.</title>
        <authorList>
            <person name="Robinson-Rechavi M."/>
            <person name="Maina C.V."/>
            <person name="Gissendanner C.R."/>
            <person name="Laudet V."/>
            <person name="Sluder A."/>
        </authorList>
    </citation>
    <scope>NUCLEOTIDE SEQUENCE [MRNA]</scope>
</reference>
<reference key="3">
    <citation type="journal article" date="1998" name="Science">
        <title>Genome sequence of the nematode C. elegans: a platform for investigating biology.</title>
        <authorList>
            <consortium name="The C. elegans sequencing consortium"/>
        </authorList>
    </citation>
    <scope>NUCLEOTIDE SEQUENCE [LARGE SCALE GENOMIC DNA]</scope>
    <source>
        <strain>Bristol N2</strain>
    </source>
</reference>
<comment type="function">
    <text>Orphan nuclear receptor.</text>
</comment>
<comment type="subcellular location">
    <subcellularLocation>
        <location evidence="1">Nucleus</location>
    </subcellularLocation>
</comment>
<comment type="similarity">
    <text evidence="4">Belongs to the nuclear hormone receptor family.</text>
</comment>
<feature type="chain" id="PRO_0000053757" description="Nuclear hormone receptor family member nhr-3">
    <location>
        <begin position="1"/>
        <end position="463"/>
    </location>
</feature>
<feature type="domain" description="NR LBD" evidence="2">
    <location>
        <begin position="199"/>
        <end position="462"/>
    </location>
</feature>
<feature type="DNA-binding region" description="Nuclear receptor" evidence="1">
    <location>
        <begin position="50"/>
        <end position="125"/>
    </location>
</feature>
<feature type="zinc finger region" description="NR C4-type" evidence="1">
    <location>
        <begin position="53"/>
        <end position="73"/>
    </location>
</feature>
<feature type="zinc finger region" description="NR C4-type" evidence="1">
    <location>
        <begin position="89"/>
        <end position="113"/>
    </location>
</feature>
<feature type="region of interest" description="Disordered" evidence="3">
    <location>
        <begin position="121"/>
        <end position="143"/>
    </location>
</feature>
<feature type="compositionally biased region" description="Basic and acidic residues" evidence="3">
    <location>
        <begin position="121"/>
        <end position="131"/>
    </location>
</feature>
<organism>
    <name type="scientific">Caenorhabditis elegans</name>
    <dbReference type="NCBI Taxonomy" id="6239"/>
    <lineage>
        <taxon>Eukaryota</taxon>
        <taxon>Metazoa</taxon>
        <taxon>Ecdysozoa</taxon>
        <taxon>Nematoda</taxon>
        <taxon>Chromadorea</taxon>
        <taxon>Rhabditida</taxon>
        <taxon>Rhabditina</taxon>
        <taxon>Rhabditomorpha</taxon>
        <taxon>Rhabditoidea</taxon>
        <taxon>Rhabditidae</taxon>
        <taxon>Peloderinae</taxon>
        <taxon>Caenorhabditis</taxon>
    </lineage>
</organism>
<keyword id="KW-0238">DNA-binding</keyword>
<keyword id="KW-0479">Metal-binding</keyword>
<keyword id="KW-0539">Nucleus</keyword>
<keyword id="KW-0675">Receptor</keyword>
<keyword id="KW-1185">Reference proteome</keyword>
<keyword id="KW-0804">Transcription</keyword>
<keyword id="KW-0805">Transcription regulation</keyword>
<keyword id="KW-0862">Zinc</keyword>
<keyword id="KW-0863">Zinc-finger</keyword>
<evidence type="ECO:0000255" key="1">
    <source>
        <dbReference type="PROSITE-ProRule" id="PRU00407"/>
    </source>
</evidence>
<evidence type="ECO:0000255" key="2">
    <source>
        <dbReference type="PROSITE-ProRule" id="PRU01189"/>
    </source>
</evidence>
<evidence type="ECO:0000256" key="3">
    <source>
        <dbReference type="SAM" id="MobiDB-lite"/>
    </source>
</evidence>
<evidence type="ECO:0000305" key="4"/>
<protein>
    <recommendedName>
        <fullName>Nuclear hormone receptor family member nhr-3</fullName>
    </recommendedName>
</protein>